<proteinExistence type="inferred from homology"/>
<evidence type="ECO:0000255" key="1">
    <source>
        <dbReference type="HAMAP-Rule" id="MF_01710"/>
    </source>
</evidence>
<reference key="1">
    <citation type="journal article" date="2003" name="Proc. Natl. Acad. Sci. U.S.A.">
        <title>Complete genome sequence of Lactobacillus plantarum WCFS1.</title>
        <authorList>
            <person name="Kleerebezem M."/>
            <person name="Boekhorst J."/>
            <person name="van Kranenburg R."/>
            <person name="Molenaar D."/>
            <person name="Kuipers O.P."/>
            <person name="Leer R."/>
            <person name="Tarchini R."/>
            <person name="Peters S.A."/>
            <person name="Sandbrink H.M."/>
            <person name="Fiers M.W.E.J."/>
            <person name="Stiekema W."/>
            <person name="Klein Lankhorst R.M."/>
            <person name="Bron P.A."/>
            <person name="Hoffer S.M."/>
            <person name="Nierop Groot M.N."/>
            <person name="Kerkhoven R."/>
            <person name="De Vries M."/>
            <person name="Ursing B."/>
            <person name="De Vos W.M."/>
            <person name="Siezen R.J."/>
        </authorList>
    </citation>
    <scope>NUCLEOTIDE SEQUENCE [LARGE SCALE GENOMIC DNA]</scope>
    <source>
        <strain>ATCC BAA-793 / NCIMB 8826 / WCFS1</strain>
    </source>
</reference>
<reference key="2">
    <citation type="journal article" date="2012" name="J. Bacteriol.">
        <title>Complete resequencing and reannotation of the Lactobacillus plantarum WCFS1 genome.</title>
        <authorList>
            <person name="Siezen R.J."/>
            <person name="Francke C."/>
            <person name="Renckens B."/>
            <person name="Boekhorst J."/>
            <person name="Wels M."/>
            <person name="Kleerebezem M."/>
            <person name="van Hijum S.A."/>
        </authorList>
    </citation>
    <scope>NUCLEOTIDE SEQUENCE [LARGE SCALE GENOMIC DNA]</scope>
    <scope>GENOME REANNOTATION</scope>
    <source>
        <strain>ATCC BAA-793 / NCIMB 8826 / WCFS1</strain>
    </source>
</reference>
<name>ECFA1_LACPL</name>
<accession>Q88XV2</accession>
<accession>F9UMP0</accession>
<keyword id="KW-0067">ATP-binding</keyword>
<keyword id="KW-1003">Cell membrane</keyword>
<keyword id="KW-0472">Membrane</keyword>
<keyword id="KW-0547">Nucleotide-binding</keyword>
<keyword id="KW-1185">Reference proteome</keyword>
<keyword id="KW-1278">Translocase</keyword>
<keyword id="KW-0813">Transport</keyword>
<organism>
    <name type="scientific">Lactiplantibacillus plantarum (strain ATCC BAA-793 / NCIMB 8826 / WCFS1)</name>
    <name type="common">Lactobacillus plantarum</name>
    <dbReference type="NCBI Taxonomy" id="220668"/>
    <lineage>
        <taxon>Bacteria</taxon>
        <taxon>Bacillati</taxon>
        <taxon>Bacillota</taxon>
        <taxon>Bacilli</taxon>
        <taxon>Lactobacillales</taxon>
        <taxon>Lactobacillaceae</taxon>
        <taxon>Lactiplantibacillus</taxon>
    </lineage>
</organism>
<sequence>MVSPIIDVKHLDYRYPQQATDQLTLHDISFTVMPGEWVAIVGHNGSGKSTLAKNLNGLLAPAAGTITVDGQVLSEETVWDIRRKIGMVFQNPDNQFVGATVADDVAFSLENQGVPRSEMLTRVQAALEQVNMQDFATREPARLSGGQKQRVALAGMIAARPQILILDEATSMLDPRGRQEVLTTIRDMKANSALTVLSITHDIDEAASANRVLVINDGEVKEEGTPAEIFQHGEALIKMGLDMPYAERLKAALKRQGVQVPAQYLTEKGMADWLWQLRSNK</sequence>
<protein>
    <recommendedName>
        <fullName evidence="1">Energy-coupling factor transporter ATP-binding protein EcfA1</fullName>
        <shortName evidence="1">ECF transporter A component EcfA1</shortName>
        <ecNumber evidence="1">7.-.-.-</ecNumber>
    </recommendedName>
</protein>
<feature type="chain" id="PRO_0000092021" description="Energy-coupling factor transporter ATP-binding protein EcfA1">
    <location>
        <begin position="1"/>
        <end position="281"/>
    </location>
</feature>
<feature type="domain" description="ABC transporter" evidence="1">
    <location>
        <begin position="6"/>
        <end position="242"/>
    </location>
</feature>
<feature type="binding site" evidence="1">
    <location>
        <begin position="42"/>
        <end position="49"/>
    </location>
    <ligand>
        <name>ATP</name>
        <dbReference type="ChEBI" id="CHEBI:30616"/>
    </ligand>
</feature>
<gene>
    <name evidence="1" type="primary">ecfA1</name>
    <name type="synonym">cbiO1</name>
    <name type="ordered locus">lp_1073</name>
</gene>
<dbReference type="EC" id="7.-.-.-" evidence="1"/>
<dbReference type="EMBL" id="AL935263">
    <property type="protein sequence ID" value="CCC78479.1"/>
    <property type="molecule type" value="Genomic_DNA"/>
</dbReference>
<dbReference type="RefSeq" id="YP_004888993.1">
    <property type="nucleotide sequence ID" value="NC_004567.2"/>
</dbReference>
<dbReference type="SMR" id="Q88XV2"/>
<dbReference type="STRING" id="220668.lp_1073"/>
<dbReference type="EnsemblBacteria" id="CCC78479">
    <property type="protein sequence ID" value="CCC78479"/>
    <property type="gene ID" value="lp_1073"/>
</dbReference>
<dbReference type="KEGG" id="lpl:lp_1073"/>
<dbReference type="PATRIC" id="fig|220668.9.peg.908"/>
<dbReference type="eggNOG" id="COG1122">
    <property type="taxonomic scope" value="Bacteria"/>
</dbReference>
<dbReference type="HOGENOM" id="CLU_000604_1_22_9"/>
<dbReference type="OrthoDB" id="9784332at2"/>
<dbReference type="PhylomeDB" id="Q88XV2"/>
<dbReference type="Proteomes" id="UP000000432">
    <property type="component" value="Chromosome"/>
</dbReference>
<dbReference type="GO" id="GO:0043190">
    <property type="term" value="C:ATP-binding cassette (ABC) transporter complex"/>
    <property type="evidence" value="ECO:0007669"/>
    <property type="project" value="TreeGrafter"/>
</dbReference>
<dbReference type="GO" id="GO:0005524">
    <property type="term" value="F:ATP binding"/>
    <property type="evidence" value="ECO:0007669"/>
    <property type="project" value="UniProtKB-KW"/>
</dbReference>
<dbReference type="GO" id="GO:0016887">
    <property type="term" value="F:ATP hydrolysis activity"/>
    <property type="evidence" value="ECO:0007669"/>
    <property type="project" value="InterPro"/>
</dbReference>
<dbReference type="GO" id="GO:0042626">
    <property type="term" value="F:ATPase-coupled transmembrane transporter activity"/>
    <property type="evidence" value="ECO:0007669"/>
    <property type="project" value="TreeGrafter"/>
</dbReference>
<dbReference type="CDD" id="cd03225">
    <property type="entry name" value="ABC_cobalt_CbiO_domain1"/>
    <property type="match status" value="1"/>
</dbReference>
<dbReference type="FunFam" id="3.40.50.300:FF:000224">
    <property type="entry name" value="Energy-coupling factor transporter ATP-binding protein EcfA"/>
    <property type="match status" value="1"/>
</dbReference>
<dbReference type="Gene3D" id="3.40.50.300">
    <property type="entry name" value="P-loop containing nucleotide triphosphate hydrolases"/>
    <property type="match status" value="1"/>
</dbReference>
<dbReference type="InterPro" id="IPR003593">
    <property type="entry name" value="AAA+_ATPase"/>
</dbReference>
<dbReference type="InterPro" id="IPR003439">
    <property type="entry name" value="ABC_transporter-like_ATP-bd"/>
</dbReference>
<dbReference type="InterPro" id="IPR017871">
    <property type="entry name" value="ABC_transporter-like_CS"/>
</dbReference>
<dbReference type="InterPro" id="IPR015856">
    <property type="entry name" value="ABC_transpr_CbiO/EcfA_su"/>
</dbReference>
<dbReference type="InterPro" id="IPR050095">
    <property type="entry name" value="ECF_ABC_transporter_ATP-bd"/>
</dbReference>
<dbReference type="InterPro" id="IPR030947">
    <property type="entry name" value="EcfA_1"/>
</dbReference>
<dbReference type="InterPro" id="IPR027417">
    <property type="entry name" value="P-loop_NTPase"/>
</dbReference>
<dbReference type="NCBIfam" id="TIGR04520">
    <property type="entry name" value="ECF_ATPase_1"/>
    <property type="match status" value="1"/>
</dbReference>
<dbReference type="NCBIfam" id="NF010156">
    <property type="entry name" value="PRK13635.1"/>
    <property type="match status" value="1"/>
</dbReference>
<dbReference type="NCBIfam" id="NF010167">
    <property type="entry name" value="PRK13648.1"/>
    <property type="match status" value="1"/>
</dbReference>
<dbReference type="PANTHER" id="PTHR43553:SF24">
    <property type="entry name" value="ENERGY-COUPLING FACTOR TRANSPORTER ATP-BINDING PROTEIN ECFA1"/>
    <property type="match status" value="1"/>
</dbReference>
<dbReference type="PANTHER" id="PTHR43553">
    <property type="entry name" value="HEAVY METAL TRANSPORTER"/>
    <property type="match status" value="1"/>
</dbReference>
<dbReference type="Pfam" id="PF00005">
    <property type="entry name" value="ABC_tran"/>
    <property type="match status" value="1"/>
</dbReference>
<dbReference type="SMART" id="SM00382">
    <property type="entry name" value="AAA"/>
    <property type="match status" value="1"/>
</dbReference>
<dbReference type="SUPFAM" id="SSF52540">
    <property type="entry name" value="P-loop containing nucleoside triphosphate hydrolases"/>
    <property type="match status" value="1"/>
</dbReference>
<dbReference type="PROSITE" id="PS00211">
    <property type="entry name" value="ABC_TRANSPORTER_1"/>
    <property type="match status" value="1"/>
</dbReference>
<dbReference type="PROSITE" id="PS50893">
    <property type="entry name" value="ABC_TRANSPORTER_2"/>
    <property type="match status" value="1"/>
</dbReference>
<dbReference type="PROSITE" id="PS51246">
    <property type="entry name" value="CBIO"/>
    <property type="match status" value="1"/>
</dbReference>
<comment type="function">
    <text evidence="1">ATP-binding (A) component of a common energy-coupling factor (ECF) ABC-transporter complex. Unlike classic ABC transporters this ECF transporter provides the energy necessary to transport a number of different substrates.</text>
</comment>
<comment type="subunit">
    <text evidence="1">Forms a stable energy-coupling factor (ECF) transporter complex composed of 2 membrane-embedded substrate-binding proteins (S component), 2 ATP-binding proteins (A component) and 2 transmembrane proteins (T component).</text>
</comment>
<comment type="subcellular location">
    <subcellularLocation>
        <location evidence="1">Cell membrane</location>
        <topology evidence="1">Peripheral membrane protein</topology>
    </subcellularLocation>
</comment>
<comment type="similarity">
    <text evidence="1">Belongs to the ABC transporter superfamily. Energy-coupling factor EcfA family.</text>
</comment>